<reference key="1">
    <citation type="journal article" date="2004" name="Proc. Natl. Acad. Sci. U.S.A.">
        <title>Structural flexibility in the Burkholderia mallei genome.</title>
        <authorList>
            <person name="Nierman W.C."/>
            <person name="DeShazer D."/>
            <person name="Kim H.S."/>
            <person name="Tettelin H."/>
            <person name="Nelson K.E."/>
            <person name="Feldblyum T.V."/>
            <person name="Ulrich R.L."/>
            <person name="Ronning C.M."/>
            <person name="Brinkac L.M."/>
            <person name="Daugherty S.C."/>
            <person name="Davidsen T.D."/>
            <person name="DeBoy R.T."/>
            <person name="Dimitrov G."/>
            <person name="Dodson R.J."/>
            <person name="Durkin A.S."/>
            <person name="Gwinn M.L."/>
            <person name="Haft D.H."/>
            <person name="Khouri H.M."/>
            <person name="Kolonay J.F."/>
            <person name="Madupu R."/>
            <person name="Mohammoud Y."/>
            <person name="Nelson W.C."/>
            <person name="Radune D."/>
            <person name="Romero C.M."/>
            <person name="Sarria S."/>
            <person name="Selengut J."/>
            <person name="Shamblin C."/>
            <person name="Sullivan S.A."/>
            <person name="White O."/>
            <person name="Yu Y."/>
            <person name="Zafar N."/>
            <person name="Zhou L."/>
            <person name="Fraser C.M."/>
        </authorList>
    </citation>
    <scope>NUCLEOTIDE SEQUENCE [LARGE SCALE GENOMIC DNA]</scope>
    <source>
        <strain>ATCC 23344</strain>
    </source>
</reference>
<protein>
    <recommendedName>
        <fullName evidence="2">Malate dehydrogenase</fullName>
        <ecNumber evidence="2">1.1.1.37</ecNumber>
    </recommendedName>
</protein>
<name>MDH_BURMA</name>
<keyword id="KW-0520">NAD</keyword>
<keyword id="KW-0560">Oxidoreductase</keyword>
<keyword id="KW-1185">Reference proteome</keyword>
<keyword id="KW-0816">Tricarboxylic acid cycle</keyword>
<dbReference type="EC" id="1.1.1.37" evidence="2"/>
<dbReference type="EMBL" id="CP000011">
    <property type="protein sequence ID" value="AAU45666.1"/>
    <property type="molecule type" value="Genomic_DNA"/>
</dbReference>
<dbReference type="RefSeq" id="WP_004187735.1">
    <property type="nucleotide sequence ID" value="NC_006349.2"/>
</dbReference>
<dbReference type="RefSeq" id="YP_106310.1">
    <property type="nucleotide sequence ID" value="NC_006349.2"/>
</dbReference>
<dbReference type="SMR" id="Q62AG8"/>
<dbReference type="KEGG" id="bma:BMAA1751"/>
<dbReference type="PATRIC" id="fig|243160.12.peg.5349"/>
<dbReference type="eggNOG" id="COG0039">
    <property type="taxonomic scope" value="Bacteria"/>
</dbReference>
<dbReference type="HOGENOM" id="CLU_040727_2_0_4"/>
<dbReference type="Proteomes" id="UP000006693">
    <property type="component" value="Chromosome 2"/>
</dbReference>
<dbReference type="GO" id="GO:0030060">
    <property type="term" value="F:L-malate dehydrogenase (NAD+) activity"/>
    <property type="evidence" value="ECO:0007669"/>
    <property type="project" value="UniProtKB-UniRule"/>
</dbReference>
<dbReference type="GO" id="GO:0006108">
    <property type="term" value="P:malate metabolic process"/>
    <property type="evidence" value="ECO:0007669"/>
    <property type="project" value="InterPro"/>
</dbReference>
<dbReference type="GO" id="GO:0006099">
    <property type="term" value="P:tricarboxylic acid cycle"/>
    <property type="evidence" value="ECO:0007669"/>
    <property type="project" value="UniProtKB-UniRule"/>
</dbReference>
<dbReference type="CDD" id="cd01338">
    <property type="entry name" value="MDH_chloroplast-like"/>
    <property type="match status" value="1"/>
</dbReference>
<dbReference type="FunFam" id="3.40.50.720:FF:000010">
    <property type="entry name" value="Malate dehydrogenase"/>
    <property type="match status" value="1"/>
</dbReference>
<dbReference type="FunFam" id="3.90.110.10:FF:000002">
    <property type="entry name" value="Malate dehydrogenase"/>
    <property type="match status" value="1"/>
</dbReference>
<dbReference type="Gene3D" id="3.90.110.10">
    <property type="entry name" value="Lactate dehydrogenase/glycoside hydrolase, family 4, C-terminal"/>
    <property type="match status" value="1"/>
</dbReference>
<dbReference type="Gene3D" id="3.40.50.720">
    <property type="entry name" value="NAD(P)-binding Rossmann-like Domain"/>
    <property type="match status" value="1"/>
</dbReference>
<dbReference type="HAMAP" id="MF_01517">
    <property type="entry name" value="Malate_dehydrog_2"/>
    <property type="match status" value="1"/>
</dbReference>
<dbReference type="InterPro" id="IPR001557">
    <property type="entry name" value="L-lactate/malate_DH"/>
</dbReference>
<dbReference type="InterPro" id="IPR022383">
    <property type="entry name" value="Lactate/malate_DH_C"/>
</dbReference>
<dbReference type="InterPro" id="IPR001236">
    <property type="entry name" value="Lactate/malate_DH_N"/>
</dbReference>
<dbReference type="InterPro" id="IPR015955">
    <property type="entry name" value="Lactate_DH/Glyco_Ohase_4_C"/>
</dbReference>
<dbReference type="InterPro" id="IPR010945">
    <property type="entry name" value="Malate_DH_type2"/>
</dbReference>
<dbReference type="InterPro" id="IPR036291">
    <property type="entry name" value="NAD(P)-bd_dom_sf"/>
</dbReference>
<dbReference type="NCBIfam" id="TIGR01759">
    <property type="entry name" value="MalateDH-SF1"/>
    <property type="match status" value="1"/>
</dbReference>
<dbReference type="NCBIfam" id="NF003916">
    <property type="entry name" value="PRK05442.1"/>
    <property type="match status" value="1"/>
</dbReference>
<dbReference type="PANTHER" id="PTHR23382">
    <property type="entry name" value="MALATE DEHYDROGENASE"/>
    <property type="match status" value="1"/>
</dbReference>
<dbReference type="Pfam" id="PF02866">
    <property type="entry name" value="Ldh_1_C"/>
    <property type="match status" value="1"/>
</dbReference>
<dbReference type="Pfam" id="PF00056">
    <property type="entry name" value="Ldh_1_N"/>
    <property type="match status" value="1"/>
</dbReference>
<dbReference type="PIRSF" id="PIRSF000102">
    <property type="entry name" value="Lac_mal_DH"/>
    <property type="match status" value="1"/>
</dbReference>
<dbReference type="SUPFAM" id="SSF56327">
    <property type="entry name" value="LDH C-terminal domain-like"/>
    <property type="match status" value="1"/>
</dbReference>
<dbReference type="SUPFAM" id="SSF51735">
    <property type="entry name" value="NAD(P)-binding Rossmann-fold domains"/>
    <property type="match status" value="1"/>
</dbReference>
<feature type="initiator methionine" description="Removed" evidence="1">
    <location>
        <position position="1"/>
    </location>
</feature>
<feature type="chain" id="PRO_0000113353" description="Malate dehydrogenase">
    <location>
        <begin position="2"/>
        <end position="327"/>
    </location>
</feature>
<feature type="active site" description="Proton acceptor" evidence="2">
    <location>
        <position position="188"/>
    </location>
</feature>
<feature type="binding site" evidence="2">
    <location>
        <begin position="12"/>
        <end position="18"/>
    </location>
    <ligand>
        <name>NAD(+)</name>
        <dbReference type="ChEBI" id="CHEBI:57540"/>
    </ligand>
</feature>
<feature type="binding site" evidence="2">
    <location>
        <position position="93"/>
    </location>
    <ligand>
        <name>substrate</name>
    </ligand>
</feature>
<feature type="binding site" evidence="2">
    <location>
        <position position="99"/>
    </location>
    <ligand>
        <name>substrate</name>
    </ligand>
</feature>
<feature type="binding site" evidence="2">
    <location>
        <position position="106"/>
    </location>
    <ligand>
        <name>NAD(+)</name>
        <dbReference type="ChEBI" id="CHEBI:57540"/>
    </ligand>
</feature>
<feature type="binding site" evidence="2">
    <location>
        <position position="113"/>
    </location>
    <ligand>
        <name>NAD(+)</name>
        <dbReference type="ChEBI" id="CHEBI:57540"/>
    </ligand>
</feature>
<feature type="binding site" evidence="2">
    <location>
        <begin position="130"/>
        <end position="132"/>
    </location>
    <ligand>
        <name>NAD(+)</name>
        <dbReference type="ChEBI" id="CHEBI:57540"/>
    </ligand>
</feature>
<feature type="binding site" evidence="2">
    <location>
        <position position="132"/>
    </location>
    <ligand>
        <name>substrate</name>
    </ligand>
</feature>
<feature type="binding site" evidence="2">
    <location>
        <position position="163"/>
    </location>
    <ligand>
        <name>substrate</name>
    </ligand>
</feature>
<organism>
    <name type="scientific">Burkholderia mallei (strain ATCC 23344)</name>
    <dbReference type="NCBI Taxonomy" id="243160"/>
    <lineage>
        <taxon>Bacteria</taxon>
        <taxon>Pseudomonadati</taxon>
        <taxon>Pseudomonadota</taxon>
        <taxon>Betaproteobacteria</taxon>
        <taxon>Burkholderiales</taxon>
        <taxon>Burkholderiaceae</taxon>
        <taxon>Burkholderia</taxon>
        <taxon>pseudomallei group</taxon>
    </lineage>
</organism>
<sequence>MAKPAKRVAVTGAAGQIAYSLLFRIANGDLLGKDQPVILQLLDLPQAQAAVKGVVMELDDCAFPLLAGVVITDDPKVAFKDADVALLVGARPRSKGMERKDLLSANAEIFTVQGAALNEVASRDVKVLVVGNPANTNAYIAMKSAPDLPKKNFTAMLRLDHNRALSQLAAKSGKPVASIEKLAVWGNHSPTMYPDFRFATAEGESLLKLINDDVWNRDTFIPTVGKRGAAIIEARGLSSAASAANAAIDHVRDWVLGTNGKWVTMGIPSDGSYGIPEDIIYGVPVICENGEYKRVEGLEIDAFSREKMDGTLAELLEERDGVAHLLK</sequence>
<comment type="function">
    <text evidence="2">Catalyzes the reversible oxidation of malate to oxaloacetate.</text>
</comment>
<comment type="catalytic activity">
    <reaction evidence="2">
        <text>(S)-malate + NAD(+) = oxaloacetate + NADH + H(+)</text>
        <dbReference type="Rhea" id="RHEA:21432"/>
        <dbReference type="ChEBI" id="CHEBI:15378"/>
        <dbReference type="ChEBI" id="CHEBI:15589"/>
        <dbReference type="ChEBI" id="CHEBI:16452"/>
        <dbReference type="ChEBI" id="CHEBI:57540"/>
        <dbReference type="ChEBI" id="CHEBI:57945"/>
        <dbReference type="EC" id="1.1.1.37"/>
    </reaction>
</comment>
<comment type="similarity">
    <text evidence="2">Belongs to the LDH/MDH superfamily. MDH type 2 family.</text>
</comment>
<gene>
    <name evidence="2" type="primary">mdh</name>
    <name type="ordered locus">BMAA1751</name>
</gene>
<accession>Q62AG8</accession>
<proteinExistence type="inferred from homology"/>
<evidence type="ECO:0000250" key="1"/>
<evidence type="ECO:0000255" key="2">
    <source>
        <dbReference type="HAMAP-Rule" id="MF_01517"/>
    </source>
</evidence>